<evidence type="ECO:0000255" key="1">
    <source>
        <dbReference type="HAMAP-Rule" id="MF_00725"/>
    </source>
</evidence>
<evidence type="ECO:0000305" key="2"/>
<dbReference type="EMBL" id="AE005174">
    <property type="protein sequence ID" value="AAG56882.1"/>
    <property type="status" value="ALT_INIT"/>
    <property type="molecule type" value="Genomic_DNA"/>
</dbReference>
<dbReference type="EMBL" id="BA000007">
    <property type="protein sequence ID" value="BAB36025.2"/>
    <property type="molecule type" value="Genomic_DNA"/>
</dbReference>
<dbReference type="PIR" id="B90954">
    <property type="entry name" value="B90954"/>
</dbReference>
<dbReference type="PIR" id="F85802">
    <property type="entry name" value="F85802"/>
</dbReference>
<dbReference type="RefSeq" id="NP_310629.2">
    <property type="nucleotide sequence ID" value="NC_002695.1"/>
</dbReference>
<dbReference type="RefSeq" id="WP_001302091.1">
    <property type="nucleotide sequence ID" value="NZ_VOAI01000010.1"/>
</dbReference>
<dbReference type="SMR" id="Q8XCE8"/>
<dbReference type="STRING" id="155864.Z2946"/>
<dbReference type="GeneID" id="913958"/>
<dbReference type="KEGG" id="ece:Z2946"/>
<dbReference type="KEGG" id="ecs:ECs_2602"/>
<dbReference type="PATRIC" id="fig|386585.9.peg.2728"/>
<dbReference type="eggNOG" id="ENOG5031P80">
    <property type="taxonomic scope" value="Bacteria"/>
</dbReference>
<dbReference type="HOGENOM" id="CLU_144160_0_0_6"/>
<dbReference type="OMA" id="REDKPMG"/>
<dbReference type="Proteomes" id="UP000000558">
    <property type="component" value="Chromosome"/>
</dbReference>
<dbReference type="Proteomes" id="UP000002519">
    <property type="component" value="Chromosome"/>
</dbReference>
<dbReference type="GO" id="GO:0005737">
    <property type="term" value="C:cytoplasm"/>
    <property type="evidence" value="ECO:0007669"/>
    <property type="project" value="UniProtKB-SubCell"/>
</dbReference>
<dbReference type="GO" id="GO:0003677">
    <property type="term" value="F:DNA binding"/>
    <property type="evidence" value="ECO:0007669"/>
    <property type="project" value="UniProtKB-UniRule"/>
</dbReference>
<dbReference type="GO" id="GO:0044780">
    <property type="term" value="P:bacterial-type flagellum assembly"/>
    <property type="evidence" value="ECO:0007669"/>
    <property type="project" value="InterPro"/>
</dbReference>
<dbReference type="GO" id="GO:0045893">
    <property type="term" value="P:positive regulation of DNA-templated transcription"/>
    <property type="evidence" value="ECO:0007669"/>
    <property type="project" value="InterPro"/>
</dbReference>
<dbReference type="GO" id="GO:1902208">
    <property type="term" value="P:regulation of bacterial-type flagellum assembly"/>
    <property type="evidence" value="ECO:0007669"/>
    <property type="project" value="UniProtKB-UniRule"/>
</dbReference>
<dbReference type="FunFam" id="1.10.4000.10:FF:000001">
    <property type="entry name" value="Flagellar transcriptional regulator FlhD"/>
    <property type="match status" value="1"/>
</dbReference>
<dbReference type="Gene3D" id="1.10.4000.10">
    <property type="entry name" value="Flagellar transcriptional activator FlhD"/>
    <property type="match status" value="1"/>
</dbReference>
<dbReference type="HAMAP" id="MF_00725">
    <property type="entry name" value="FlhD"/>
    <property type="match status" value="1"/>
</dbReference>
<dbReference type="InterPro" id="IPR023559">
    <property type="entry name" value="Flagellar_FlhD"/>
</dbReference>
<dbReference type="InterPro" id="IPR036194">
    <property type="entry name" value="FlhD_sf"/>
</dbReference>
<dbReference type="NCBIfam" id="NF002783">
    <property type="entry name" value="PRK02909.1-1"/>
    <property type="match status" value="1"/>
</dbReference>
<dbReference type="Pfam" id="PF05247">
    <property type="entry name" value="FlhD"/>
    <property type="match status" value="1"/>
</dbReference>
<dbReference type="SUPFAM" id="SSF63592">
    <property type="entry name" value="Flagellar transcriptional activator FlhD"/>
    <property type="match status" value="1"/>
</dbReference>
<gene>
    <name evidence="1" type="primary">flhD</name>
    <name type="ordered locus">Z2946</name>
    <name type="ordered locus">ECs2602</name>
</gene>
<name>FLHD_ECO57</name>
<feature type="chain" id="PRO_0000182715" description="Flagellar transcriptional regulator FlhD">
    <location>
        <begin position="1"/>
        <end position="116"/>
    </location>
</feature>
<feature type="disulfide bond" description="Interchain" evidence="1">
    <location>
        <position position="65"/>
    </location>
</feature>
<proteinExistence type="inferred from homology"/>
<comment type="function">
    <text evidence="1">Functions in complex with FlhC as a master transcriptional regulator that regulates transcription of several flagellar and non-flagellar operons by binding to their promoter region. Activates expression of class 2 flagellar genes, including fliA, which is a flagellum-specific sigma factor that turns on the class 3 genes. Also regulates genes whose products function in a variety of physiological pathways.</text>
</comment>
<comment type="subunit">
    <text evidence="1">Homodimer; disulfide-linked. Forms a heterohexamer composed of two FlhC and four FlhD subunits. Each FlhC binds a FlhD dimer, forming a heterotrimer, and a hexamer assembles by dimerization of two heterotrimers.</text>
</comment>
<comment type="subcellular location">
    <subcellularLocation>
        <location evidence="1">Cytoplasm</location>
    </subcellularLocation>
</comment>
<comment type="domain">
    <text evidence="1">The C-terminal region contains a putative helix-turn-helix (HTH) motif, suggesting that this region may bind DNA.</text>
</comment>
<comment type="similarity">
    <text evidence="1">Belongs to the FlhD family.</text>
</comment>
<comment type="sequence caution" evidence="2">
    <conflict type="erroneous initiation">
        <sequence resource="EMBL-CDS" id="AAG56882"/>
    </conflict>
    <text>Extended N-terminus.</text>
</comment>
<reference key="1">
    <citation type="journal article" date="2001" name="Nature">
        <title>Genome sequence of enterohaemorrhagic Escherichia coli O157:H7.</title>
        <authorList>
            <person name="Perna N.T."/>
            <person name="Plunkett G. III"/>
            <person name="Burland V."/>
            <person name="Mau B."/>
            <person name="Glasner J.D."/>
            <person name="Rose D.J."/>
            <person name="Mayhew G.F."/>
            <person name="Evans P.S."/>
            <person name="Gregor J."/>
            <person name="Kirkpatrick H.A."/>
            <person name="Posfai G."/>
            <person name="Hackett J."/>
            <person name="Klink S."/>
            <person name="Boutin A."/>
            <person name="Shao Y."/>
            <person name="Miller L."/>
            <person name="Grotbeck E.J."/>
            <person name="Davis N.W."/>
            <person name="Lim A."/>
            <person name="Dimalanta E.T."/>
            <person name="Potamousis K."/>
            <person name="Apodaca J."/>
            <person name="Anantharaman T.S."/>
            <person name="Lin J."/>
            <person name="Yen G."/>
            <person name="Schwartz D.C."/>
            <person name="Welch R.A."/>
            <person name="Blattner F.R."/>
        </authorList>
    </citation>
    <scope>NUCLEOTIDE SEQUENCE [LARGE SCALE GENOMIC DNA]</scope>
    <source>
        <strain>O157:H7 / EDL933 / ATCC 700927 / EHEC</strain>
    </source>
</reference>
<reference key="2">
    <citation type="journal article" date="2001" name="DNA Res.">
        <title>Complete genome sequence of enterohemorrhagic Escherichia coli O157:H7 and genomic comparison with a laboratory strain K-12.</title>
        <authorList>
            <person name="Hayashi T."/>
            <person name="Makino K."/>
            <person name="Ohnishi M."/>
            <person name="Kurokawa K."/>
            <person name="Ishii K."/>
            <person name="Yokoyama K."/>
            <person name="Han C.-G."/>
            <person name="Ohtsubo E."/>
            <person name="Nakayama K."/>
            <person name="Murata T."/>
            <person name="Tanaka M."/>
            <person name="Tobe T."/>
            <person name="Iida T."/>
            <person name="Takami H."/>
            <person name="Honda T."/>
            <person name="Sasakawa C."/>
            <person name="Ogasawara N."/>
            <person name="Yasunaga T."/>
            <person name="Kuhara S."/>
            <person name="Shiba T."/>
            <person name="Hattori M."/>
            <person name="Shinagawa H."/>
        </authorList>
    </citation>
    <scope>NUCLEOTIDE SEQUENCE [LARGE SCALE GENOMIC DNA]</scope>
    <source>
        <strain>O157:H7 / Sakai / RIMD 0509952 / EHEC</strain>
    </source>
</reference>
<sequence length="116" mass="13301">MHTSELLKHIYDINLSYLLLAQRLIVQDKASAMFRLGINEEMATTLAALTLPQMVKLAETNQLVCHFRFDSHQTITLLTQDSRVDDLQQIHTGIMLSTRLLNDVNQPEEALRKKRA</sequence>
<organism>
    <name type="scientific">Escherichia coli O157:H7</name>
    <dbReference type="NCBI Taxonomy" id="83334"/>
    <lineage>
        <taxon>Bacteria</taxon>
        <taxon>Pseudomonadati</taxon>
        <taxon>Pseudomonadota</taxon>
        <taxon>Gammaproteobacteria</taxon>
        <taxon>Enterobacterales</taxon>
        <taxon>Enterobacteriaceae</taxon>
        <taxon>Escherichia</taxon>
    </lineage>
</organism>
<protein>
    <recommendedName>
        <fullName evidence="1">Flagellar transcriptional regulator FlhD</fullName>
    </recommendedName>
</protein>
<accession>Q8XCE8</accession>
<keyword id="KW-0010">Activator</keyword>
<keyword id="KW-1005">Bacterial flagellum biogenesis</keyword>
<keyword id="KW-0963">Cytoplasm</keyword>
<keyword id="KW-1015">Disulfide bond</keyword>
<keyword id="KW-0238">DNA-binding</keyword>
<keyword id="KW-1185">Reference proteome</keyword>
<keyword id="KW-0804">Transcription</keyword>
<keyword id="KW-0805">Transcription regulation</keyword>